<sequence>MLQPKRTKFRKMHKGRNRGLAQGTDVSFGSFGLKAVGRGRLTARQIEAARRAMTRAVKRQGKIWIRVFPDKPITEKPLAVRMGKGKGNVEYWVALIQPGKVLYEMDGVPEELAREAFKLAAAKLPIKTTFVTKTVM</sequence>
<feature type="chain" id="PRO_0000062196" description="Large ribosomal subunit protein uL16">
    <location>
        <begin position="1"/>
        <end position="136"/>
    </location>
</feature>
<gene>
    <name evidence="1" type="primary">rplP</name>
    <name type="ordered locus">SBO_3307</name>
</gene>
<keyword id="KW-0687">Ribonucleoprotein</keyword>
<keyword id="KW-0689">Ribosomal protein</keyword>
<keyword id="KW-0694">RNA-binding</keyword>
<keyword id="KW-0699">rRNA-binding</keyword>
<keyword id="KW-0820">tRNA-binding</keyword>
<dbReference type="EMBL" id="CP000036">
    <property type="protein sequence ID" value="ABB67795.1"/>
    <property type="molecule type" value="Genomic_DNA"/>
</dbReference>
<dbReference type="RefSeq" id="WP_000941212.1">
    <property type="nucleotide sequence ID" value="NC_007613.1"/>
</dbReference>
<dbReference type="SMR" id="Q31VW3"/>
<dbReference type="GeneID" id="93778674"/>
<dbReference type="KEGG" id="sbo:SBO_3307"/>
<dbReference type="HOGENOM" id="CLU_078858_2_1_6"/>
<dbReference type="Proteomes" id="UP000007067">
    <property type="component" value="Chromosome"/>
</dbReference>
<dbReference type="GO" id="GO:0022625">
    <property type="term" value="C:cytosolic large ribosomal subunit"/>
    <property type="evidence" value="ECO:0007669"/>
    <property type="project" value="TreeGrafter"/>
</dbReference>
<dbReference type="GO" id="GO:0019843">
    <property type="term" value="F:rRNA binding"/>
    <property type="evidence" value="ECO:0007669"/>
    <property type="project" value="UniProtKB-UniRule"/>
</dbReference>
<dbReference type="GO" id="GO:0003735">
    <property type="term" value="F:structural constituent of ribosome"/>
    <property type="evidence" value="ECO:0007669"/>
    <property type="project" value="InterPro"/>
</dbReference>
<dbReference type="GO" id="GO:0000049">
    <property type="term" value="F:tRNA binding"/>
    <property type="evidence" value="ECO:0007669"/>
    <property type="project" value="UniProtKB-KW"/>
</dbReference>
<dbReference type="GO" id="GO:0006412">
    <property type="term" value="P:translation"/>
    <property type="evidence" value="ECO:0007669"/>
    <property type="project" value="UniProtKB-UniRule"/>
</dbReference>
<dbReference type="CDD" id="cd01433">
    <property type="entry name" value="Ribosomal_L16_L10e"/>
    <property type="match status" value="1"/>
</dbReference>
<dbReference type="FunFam" id="3.90.1170.10:FF:000001">
    <property type="entry name" value="50S ribosomal protein L16"/>
    <property type="match status" value="1"/>
</dbReference>
<dbReference type="Gene3D" id="3.90.1170.10">
    <property type="entry name" value="Ribosomal protein L10e/L16"/>
    <property type="match status" value="1"/>
</dbReference>
<dbReference type="HAMAP" id="MF_01342">
    <property type="entry name" value="Ribosomal_uL16"/>
    <property type="match status" value="1"/>
</dbReference>
<dbReference type="InterPro" id="IPR047873">
    <property type="entry name" value="Ribosomal_uL16"/>
</dbReference>
<dbReference type="InterPro" id="IPR000114">
    <property type="entry name" value="Ribosomal_uL16_bact-type"/>
</dbReference>
<dbReference type="InterPro" id="IPR020798">
    <property type="entry name" value="Ribosomal_uL16_CS"/>
</dbReference>
<dbReference type="InterPro" id="IPR016180">
    <property type="entry name" value="Ribosomal_uL16_dom"/>
</dbReference>
<dbReference type="InterPro" id="IPR036920">
    <property type="entry name" value="Ribosomal_uL16_sf"/>
</dbReference>
<dbReference type="NCBIfam" id="TIGR01164">
    <property type="entry name" value="rplP_bact"/>
    <property type="match status" value="1"/>
</dbReference>
<dbReference type="PANTHER" id="PTHR12220">
    <property type="entry name" value="50S/60S RIBOSOMAL PROTEIN L16"/>
    <property type="match status" value="1"/>
</dbReference>
<dbReference type="PANTHER" id="PTHR12220:SF13">
    <property type="entry name" value="LARGE RIBOSOMAL SUBUNIT PROTEIN UL16M"/>
    <property type="match status" value="1"/>
</dbReference>
<dbReference type="Pfam" id="PF00252">
    <property type="entry name" value="Ribosomal_L16"/>
    <property type="match status" value="1"/>
</dbReference>
<dbReference type="PRINTS" id="PR00060">
    <property type="entry name" value="RIBOSOMALL16"/>
</dbReference>
<dbReference type="SUPFAM" id="SSF54686">
    <property type="entry name" value="Ribosomal protein L16p/L10e"/>
    <property type="match status" value="1"/>
</dbReference>
<dbReference type="PROSITE" id="PS00586">
    <property type="entry name" value="RIBOSOMAL_L16_1"/>
    <property type="match status" value="1"/>
</dbReference>
<dbReference type="PROSITE" id="PS00701">
    <property type="entry name" value="RIBOSOMAL_L16_2"/>
    <property type="match status" value="1"/>
</dbReference>
<organism>
    <name type="scientific">Shigella boydii serotype 4 (strain Sb227)</name>
    <dbReference type="NCBI Taxonomy" id="300268"/>
    <lineage>
        <taxon>Bacteria</taxon>
        <taxon>Pseudomonadati</taxon>
        <taxon>Pseudomonadota</taxon>
        <taxon>Gammaproteobacteria</taxon>
        <taxon>Enterobacterales</taxon>
        <taxon>Enterobacteriaceae</taxon>
        <taxon>Shigella</taxon>
    </lineage>
</organism>
<name>RL16_SHIBS</name>
<accession>Q31VW3</accession>
<reference key="1">
    <citation type="journal article" date="2005" name="Nucleic Acids Res.">
        <title>Genome dynamics and diversity of Shigella species, the etiologic agents of bacillary dysentery.</title>
        <authorList>
            <person name="Yang F."/>
            <person name="Yang J."/>
            <person name="Zhang X."/>
            <person name="Chen L."/>
            <person name="Jiang Y."/>
            <person name="Yan Y."/>
            <person name="Tang X."/>
            <person name="Wang J."/>
            <person name="Xiong Z."/>
            <person name="Dong J."/>
            <person name="Xue Y."/>
            <person name="Zhu Y."/>
            <person name="Xu X."/>
            <person name="Sun L."/>
            <person name="Chen S."/>
            <person name="Nie H."/>
            <person name="Peng J."/>
            <person name="Xu J."/>
            <person name="Wang Y."/>
            <person name="Yuan Z."/>
            <person name="Wen Y."/>
            <person name="Yao Z."/>
            <person name="Shen Y."/>
            <person name="Qiang B."/>
            <person name="Hou Y."/>
            <person name="Yu J."/>
            <person name="Jin Q."/>
        </authorList>
    </citation>
    <scope>NUCLEOTIDE SEQUENCE [LARGE SCALE GENOMIC DNA]</scope>
    <source>
        <strain>Sb227</strain>
    </source>
</reference>
<comment type="function">
    <text evidence="1">Binds 23S rRNA and is also seen to make contacts with the A and possibly P site tRNAs.</text>
</comment>
<comment type="subunit">
    <text evidence="1">Part of the 50S ribosomal subunit.</text>
</comment>
<comment type="similarity">
    <text evidence="1">Belongs to the universal ribosomal protein uL16 family.</text>
</comment>
<evidence type="ECO:0000255" key="1">
    <source>
        <dbReference type="HAMAP-Rule" id="MF_01342"/>
    </source>
</evidence>
<evidence type="ECO:0000305" key="2"/>
<proteinExistence type="inferred from homology"/>
<protein>
    <recommendedName>
        <fullName evidence="1">Large ribosomal subunit protein uL16</fullName>
    </recommendedName>
    <alternativeName>
        <fullName evidence="2">50S ribosomal protein L16</fullName>
    </alternativeName>
</protein>